<comment type="function">
    <text evidence="1">Catalyzes the dephosphorylation of undecaprenyl diphosphate (UPP). Confers resistance to bacitracin.</text>
</comment>
<comment type="catalytic activity">
    <reaction evidence="1">
        <text>di-trans,octa-cis-undecaprenyl diphosphate + H2O = di-trans,octa-cis-undecaprenyl phosphate + phosphate + H(+)</text>
        <dbReference type="Rhea" id="RHEA:28094"/>
        <dbReference type="ChEBI" id="CHEBI:15377"/>
        <dbReference type="ChEBI" id="CHEBI:15378"/>
        <dbReference type="ChEBI" id="CHEBI:43474"/>
        <dbReference type="ChEBI" id="CHEBI:58405"/>
        <dbReference type="ChEBI" id="CHEBI:60392"/>
        <dbReference type="EC" id="3.6.1.27"/>
    </reaction>
</comment>
<comment type="subcellular location">
    <subcellularLocation>
        <location evidence="1">Cell inner membrane</location>
        <topology evidence="1">Multi-pass membrane protein</topology>
    </subcellularLocation>
</comment>
<comment type="miscellaneous">
    <text>Bacitracin is thought to be involved in the inhibition of peptidoglycan synthesis by sequestering undecaprenyl diphosphate, thereby reducing the pool of lipid carrier available.</text>
</comment>
<comment type="similarity">
    <text evidence="1">Belongs to the UppP family.</text>
</comment>
<gene>
    <name evidence="1" type="primary">uppP</name>
    <name type="synonym">bacA</name>
    <name type="synonym">upk</name>
    <name type="ordered locus">CT0329</name>
</gene>
<accession>Q8KFJ7</accession>
<proteinExistence type="inferred from homology"/>
<dbReference type="EC" id="3.6.1.27" evidence="1"/>
<dbReference type="EMBL" id="AE006470">
    <property type="protein sequence ID" value="AAM71575.1"/>
    <property type="molecule type" value="Genomic_DNA"/>
</dbReference>
<dbReference type="RefSeq" id="NP_661233.1">
    <property type="nucleotide sequence ID" value="NC_002932.3"/>
</dbReference>
<dbReference type="RefSeq" id="WP_010932021.1">
    <property type="nucleotide sequence ID" value="NC_002932.3"/>
</dbReference>
<dbReference type="SMR" id="Q8KFJ7"/>
<dbReference type="STRING" id="194439.CT0329"/>
<dbReference type="EnsemblBacteria" id="AAM71575">
    <property type="protein sequence ID" value="AAM71575"/>
    <property type="gene ID" value="CT0329"/>
</dbReference>
<dbReference type="KEGG" id="cte:CT0329"/>
<dbReference type="PATRIC" id="fig|194439.7.peg.319"/>
<dbReference type="eggNOG" id="COG1968">
    <property type="taxonomic scope" value="Bacteria"/>
</dbReference>
<dbReference type="HOGENOM" id="CLU_060296_1_0_10"/>
<dbReference type="OrthoDB" id="9808289at2"/>
<dbReference type="Proteomes" id="UP000001007">
    <property type="component" value="Chromosome"/>
</dbReference>
<dbReference type="GO" id="GO:0005886">
    <property type="term" value="C:plasma membrane"/>
    <property type="evidence" value="ECO:0007669"/>
    <property type="project" value="UniProtKB-SubCell"/>
</dbReference>
<dbReference type="GO" id="GO:0050380">
    <property type="term" value="F:undecaprenyl-diphosphatase activity"/>
    <property type="evidence" value="ECO:0007669"/>
    <property type="project" value="UniProtKB-UniRule"/>
</dbReference>
<dbReference type="GO" id="GO:0071555">
    <property type="term" value="P:cell wall organization"/>
    <property type="evidence" value="ECO:0007669"/>
    <property type="project" value="UniProtKB-KW"/>
</dbReference>
<dbReference type="GO" id="GO:0009252">
    <property type="term" value="P:peptidoglycan biosynthetic process"/>
    <property type="evidence" value="ECO:0007669"/>
    <property type="project" value="UniProtKB-KW"/>
</dbReference>
<dbReference type="GO" id="GO:0008360">
    <property type="term" value="P:regulation of cell shape"/>
    <property type="evidence" value="ECO:0007669"/>
    <property type="project" value="UniProtKB-KW"/>
</dbReference>
<dbReference type="GO" id="GO:0046677">
    <property type="term" value="P:response to antibiotic"/>
    <property type="evidence" value="ECO:0007669"/>
    <property type="project" value="UniProtKB-UniRule"/>
</dbReference>
<dbReference type="HAMAP" id="MF_01006">
    <property type="entry name" value="Undec_diphosphatase"/>
    <property type="match status" value="1"/>
</dbReference>
<dbReference type="InterPro" id="IPR003824">
    <property type="entry name" value="UppP"/>
</dbReference>
<dbReference type="NCBIfam" id="NF001392">
    <property type="entry name" value="PRK00281.2-1"/>
    <property type="match status" value="1"/>
</dbReference>
<dbReference type="NCBIfam" id="TIGR00753">
    <property type="entry name" value="undec_PP_bacA"/>
    <property type="match status" value="1"/>
</dbReference>
<dbReference type="PANTHER" id="PTHR30622">
    <property type="entry name" value="UNDECAPRENYL-DIPHOSPHATASE"/>
    <property type="match status" value="1"/>
</dbReference>
<dbReference type="PANTHER" id="PTHR30622:SF4">
    <property type="entry name" value="UNDECAPRENYL-DIPHOSPHATASE"/>
    <property type="match status" value="1"/>
</dbReference>
<dbReference type="Pfam" id="PF02673">
    <property type="entry name" value="BacA"/>
    <property type="match status" value="1"/>
</dbReference>
<feature type="chain" id="PRO_0000151131" description="Undecaprenyl-diphosphatase">
    <location>
        <begin position="1"/>
        <end position="282"/>
    </location>
</feature>
<feature type="transmembrane region" description="Helical" evidence="1">
    <location>
        <begin position="1"/>
        <end position="21"/>
    </location>
</feature>
<feature type="transmembrane region" description="Helical" evidence="1">
    <location>
        <begin position="40"/>
        <end position="60"/>
    </location>
</feature>
<feature type="transmembrane region" description="Helical" evidence="1">
    <location>
        <begin position="89"/>
        <end position="109"/>
    </location>
</feature>
<feature type="transmembrane region" description="Helical" evidence="1">
    <location>
        <begin position="112"/>
        <end position="132"/>
    </location>
</feature>
<feature type="transmembrane region" description="Helical" evidence="1">
    <location>
        <begin position="153"/>
        <end position="173"/>
    </location>
</feature>
<feature type="transmembrane region" description="Helical" evidence="1">
    <location>
        <begin position="196"/>
        <end position="216"/>
    </location>
</feature>
<feature type="transmembrane region" description="Helical" evidence="1">
    <location>
        <begin position="228"/>
        <end position="248"/>
    </location>
</feature>
<feature type="transmembrane region" description="Helical" evidence="1">
    <location>
        <begin position="258"/>
        <end position="278"/>
    </location>
</feature>
<keyword id="KW-0046">Antibiotic resistance</keyword>
<keyword id="KW-0997">Cell inner membrane</keyword>
<keyword id="KW-1003">Cell membrane</keyword>
<keyword id="KW-0133">Cell shape</keyword>
<keyword id="KW-0961">Cell wall biogenesis/degradation</keyword>
<keyword id="KW-0378">Hydrolase</keyword>
<keyword id="KW-0472">Membrane</keyword>
<keyword id="KW-0573">Peptidoglycan synthesis</keyword>
<keyword id="KW-1185">Reference proteome</keyword>
<keyword id="KW-0812">Transmembrane</keyword>
<keyword id="KW-1133">Transmembrane helix</keyword>
<sequence length="282" mass="30197">MNLFQAIILGIIQGLTEFLPISSSAHLRIVPALMGWGDPGAAFTAIIQIGTLAAVLIYFAKDIVSISGAVISGLVKGKPLGTDEARTGWMIAVGTIPIVVFGLTFKHEIETVLRSLYIVSASMIGLALVLVVAEKHTANRARDGRRGKSINELSWTDAIIIGLAQAMALIPGSSRSGVTITGGLFRNLDRETAARFSFLLSLPSVFAAGMLELYQTRQEIMSSTHNMLNLAVATIAAFIFGYLSIAFLLNYLKRHTTGIFIAYRLILGIGLIVMIGTGHLLP</sequence>
<protein>
    <recommendedName>
        <fullName evidence="1">Undecaprenyl-diphosphatase</fullName>
        <ecNumber evidence="1">3.6.1.27</ecNumber>
    </recommendedName>
    <alternativeName>
        <fullName evidence="1">Bacitracin resistance protein</fullName>
    </alternativeName>
    <alternativeName>
        <fullName evidence="1">Undecaprenyl pyrophosphate phosphatase</fullName>
    </alternativeName>
</protein>
<name>UPPP_CHLTE</name>
<reference key="1">
    <citation type="journal article" date="2002" name="Proc. Natl. Acad. Sci. U.S.A.">
        <title>The complete genome sequence of Chlorobium tepidum TLS, a photosynthetic, anaerobic, green-sulfur bacterium.</title>
        <authorList>
            <person name="Eisen J.A."/>
            <person name="Nelson K.E."/>
            <person name="Paulsen I.T."/>
            <person name="Heidelberg J.F."/>
            <person name="Wu M."/>
            <person name="Dodson R.J."/>
            <person name="DeBoy R.T."/>
            <person name="Gwinn M.L."/>
            <person name="Nelson W.C."/>
            <person name="Haft D.H."/>
            <person name="Hickey E.K."/>
            <person name="Peterson J.D."/>
            <person name="Durkin A.S."/>
            <person name="Kolonay J.F."/>
            <person name="Yang F."/>
            <person name="Holt I.E."/>
            <person name="Umayam L.A."/>
            <person name="Mason T.M."/>
            <person name="Brenner M."/>
            <person name="Shea T.P."/>
            <person name="Parksey D.S."/>
            <person name="Nierman W.C."/>
            <person name="Feldblyum T.V."/>
            <person name="Hansen C.L."/>
            <person name="Craven M.B."/>
            <person name="Radune D."/>
            <person name="Vamathevan J.J."/>
            <person name="Khouri H.M."/>
            <person name="White O."/>
            <person name="Gruber T.M."/>
            <person name="Ketchum K.A."/>
            <person name="Venter J.C."/>
            <person name="Tettelin H."/>
            <person name="Bryant D.A."/>
            <person name="Fraser C.M."/>
        </authorList>
    </citation>
    <scope>NUCLEOTIDE SEQUENCE [LARGE SCALE GENOMIC DNA]</scope>
    <source>
        <strain>ATCC 49652 / DSM 12025 / NBRC 103806 / TLS</strain>
    </source>
</reference>
<organism>
    <name type="scientific">Chlorobaculum tepidum (strain ATCC 49652 / DSM 12025 / NBRC 103806 / TLS)</name>
    <name type="common">Chlorobium tepidum</name>
    <dbReference type="NCBI Taxonomy" id="194439"/>
    <lineage>
        <taxon>Bacteria</taxon>
        <taxon>Pseudomonadati</taxon>
        <taxon>Chlorobiota</taxon>
        <taxon>Chlorobiia</taxon>
        <taxon>Chlorobiales</taxon>
        <taxon>Chlorobiaceae</taxon>
        <taxon>Chlorobaculum</taxon>
    </lineage>
</organism>
<evidence type="ECO:0000255" key="1">
    <source>
        <dbReference type="HAMAP-Rule" id="MF_01006"/>
    </source>
</evidence>